<sequence length="622" mass="69128">MSTEHKQYLSAVTLAAIGVVYGDIGTSPLYTLRECFSGHYGFDVRPDVVFGFLSLIFWMLILVVSVKYLTYVMRADNAGEGGILTLMSLAGRNISSRATSILVVLGLIGGSFFYGEVVITPAISVMSAIEGLEIAAPALDPYIVPCSIAVLTLLFVIQKHGTGSVGKLFAPVMLVWFLTLALLGLRSIIANPEVLAALNPKWAISFFVEYKSVSFFALGAVVLAITGVEALYADMGHFGKFPIRLAWFTVVLPSLVLNYFGQGALLLKNPEAIKNPFFLLAPDWALIPLLILATLATVIASQAVISGVFSLTRQAVRLGYLPPMRIIHTSEMESGQIYIPVINWTLYLAVVLVIIGFERSSNLAAAYGIAVTGTMVITSILFCTVAWKNWHWNRFLVVFLLMVLLIIDIPMFSANVLKLFSGGWLPLSLGLVMFIIMTTWKSERFSLLRRMHEHSNSLEAMIASLEKSPPVRVPGTAVYMSRAMNVIPFALLHNLKHNKVLHERVVLLTMRTDDVPYVHNVERVTIEQLSPTFWRVVARYGWRETPNVAEIFHRCGLEGLSCQMMETSFFMSHESLILTKRPWHLFLRGKLFIALSRNALRAPDQFEIPPNRVIELGTQVEI</sequence>
<name>KUP_YERPP</name>
<evidence type="ECO:0000255" key="1">
    <source>
        <dbReference type="HAMAP-Rule" id="MF_01522"/>
    </source>
</evidence>
<protein>
    <recommendedName>
        <fullName evidence="1">Low affinity potassium transport system protein Kup</fullName>
    </recommendedName>
    <alternativeName>
        <fullName evidence="1">Kup system potassium uptake protein</fullName>
    </alternativeName>
</protein>
<feature type="chain" id="PRO_0000296770" description="Low affinity potassium transport system protein Kup">
    <location>
        <begin position="1"/>
        <end position="622"/>
    </location>
</feature>
<feature type="transmembrane region" description="Helical" evidence="1">
    <location>
        <begin position="9"/>
        <end position="29"/>
    </location>
</feature>
<feature type="transmembrane region" description="Helical" evidence="1">
    <location>
        <begin position="46"/>
        <end position="66"/>
    </location>
</feature>
<feature type="transmembrane region" description="Helical" evidence="1">
    <location>
        <begin position="101"/>
        <end position="121"/>
    </location>
</feature>
<feature type="transmembrane region" description="Helical" evidence="1">
    <location>
        <begin position="137"/>
        <end position="157"/>
    </location>
</feature>
<feature type="transmembrane region" description="Helical" evidence="1">
    <location>
        <begin position="165"/>
        <end position="185"/>
    </location>
</feature>
<feature type="transmembrane region" description="Helical" evidence="1">
    <location>
        <begin position="213"/>
        <end position="233"/>
    </location>
</feature>
<feature type="transmembrane region" description="Helical" evidence="1">
    <location>
        <begin position="247"/>
        <end position="267"/>
    </location>
</feature>
<feature type="transmembrane region" description="Helical" evidence="1">
    <location>
        <begin position="276"/>
        <end position="296"/>
    </location>
</feature>
<feature type="transmembrane region" description="Helical" evidence="1">
    <location>
        <begin position="337"/>
        <end position="357"/>
    </location>
</feature>
<feature type="transmembrane region" description="Helical" evidence="1">
    <location>
        <begin position="363"/>
        <end position="383"/>
    </location>
</feature>
<feature type="transmembrane region" description="Helical" evidence="1">
    <location>
        <begin position="395"/>
        <end position="415"/>
    </location>
</feature>
<feature type="transmembrane region" description="Helical" evidence="1">
    <location>
        <begin position="416"/>
        <end position="436"/>
    </location>
</feature>
<comment type="function">
    <text evidence="1">Responsible for the low-affinity transport of potassium into the cell. Likely operates as a K(+):H(+) symporter.</text>
</comment>
<comment type="catalytic activity">
    <reaction evidence="1">
        <text>K(+)(in) + H(+)(in) = K(+)(out) + H(+)(out)</text>
        <dbReference type="Rhea" id="RHEA:28490"/>
        <dbReference type="ChEBI" id="CHEBI:15378"/>
        <dbReference type="ChEBI" id="CHEBI:29103"/>
    </reaction>
    <physiologicalReaction direction="right-to-left" evidence="1">
        <dbReference type="Rhea" id="RHEA:28492"/>
    </physiologicalReaction>
</comment>
<comment type="subcellular location">
    <subcellularLocation>
        <location evidence="1">Cell inner membrane</location>
        <topology evidence="1">Multi-pass membrane protein</topology>
    </subcellularLocation>
</comment>
<comment type="similarity">
    <text evidence="1">Belongs to the HAK/KUP transporter (TC 2.A.72) family.</text>
</comment>
<reference key="1">
    <citation type="submission" date="2007-02" db="EMBL/GenBank/DDBJ databases">
        <title>Complete sequence of chromosome of Yersinia pestis Pestoides F.</title>
        <authorList>
            <consortium name="US DOE Joint Genome Institute"/>
            <person name="Copeland A."/>
            <person name="Lucas S."/>
            <person name="Lapidus A."/>
            <person name="Barry K."/>
            <person name="Detter J.C."/>
            <person name="Glavina del Rio T."/>
            <person name="Hammon N."/>
            <person name="Israni S."/>
            <person name="Dalin E."/>
            <person name="Tice H."/>
            <person name="Pitluck S."/>
            <person name="Di Bartolo G."/>
            <person name="Chain P."/>
            <person name="Malfatti S."/>
            <person name="Shin M."/>
            <person name="Vergez L."/>
            <person name="Schmutz J."/>
            <person name="Larimer F."/>
            <person name="Land M."/>
            <person name="Hauser L."/>
            <person name="Worsham P."/>
            <person name="Chu M."/>
            <person name="Bearden S."/>
            <person name="Garcia E."/>
            <person name="Richardson P."/>
        </authorList>
    </citation>
    <scope>NUCLEOTIDE SEQUENCE [LARGE SCALE GENOMIC DNA]</scope>
    <source>
        <strain>Pestoides F</strain>
    </source>
</reference>
<dbReference type="EMBL" id="CP000668">
    <property type="protein sequence ID" value="ABP42240.1"/>
    <property type="molecule type" value="Genomic_DNA"/>
</dbReference>
<dbReference type="RefSeq" id="WP_011906476.1">
    <property type="nucleotide sequence ID" value="NZ_CP009715.1"/>
</dbReference>
<dbReference type="KEGG" id="ypp:YPDSF_3899"/>
<dbReference type="PATRIC" id="fig|386656.14.peg.618"/>
<dbReference type="GO" id="GO:0005886">
    <property type="term" value="C:plasma membrane"/>
    <property type="evidence" value="ECO:0007669"/>
    <property type="project" value="UniProtKB-SubCell"/>
</dbReference>
<dbReference type="GO" id="GO:0015079">
    <property type="term" value="F:potassium ion transmembrane transporter activity"/>
    <property type="evidence" value="ECO:0007669"/>
    <property type="project" value="UniProtKB-UniRule"/>
</dbReference>
<dbReference type="GO" id="GO:0015293">
    <property type="term" value="F:symporter activity"/>
    <property type="evidence" value="ECO:0007669"/>
    <property type="project" value="UniProtKB-UniRule"/>
</dbReference>
<dbReference type="HAMAP" id="MF_01522">
    <property type="entry name" value="Kup"/>
    <property type="match status" value="1"/>
</dbReference>
<dbReference type="InterPro" id="IPR003855">
    <property type="entry name" value="K+_transporter"/>
</dbReference>
<dbReference type="InterPro" id="IPR053952">
    <property type="entry name" value="K_trans_C"/>
</dbReference>
<dbReference type="InterPro" id="IPR053951">
    <property type="entry name" value="K_trans_N"/>
</dbReference>
<dbReference type="InterPro" id="IPR023051">
    <property type="entry name" value="Kup"/>
</dbReference>
<dbReference type="NCBIfam" id="TIGR00794">
    <property type="entry name" value="kup"/>
    <property type="match status" value="1"/>
</dbReference>
<dbReference type="NCBIfam" id="NF008015">
    <property type="entry name" value="PRK10745.1"/>
    <property type="match status" value="1"/>
</dbReference>
<dbReference type="PANTHER" id="PTHR30540:SF79">
    <property type="entry name" value="LOW AFFINITY POTASSIUM TRANSPORT SYSTEM PROTEIN KUP"/>
    <property type="match status" value="1"/>
</dbReference>
<dbReference type="PANTHER" id="PTHR30540">
    <property type="entry name" value="OSMOTIC STRESS POTASSIUM TRANSPORTER"/>
    <property type="match status" value="1"/>
</dbReference>
<dbReference type="Pfam" id="PF02705">
    <property type="entry name" value="K_trans"/>
    <property type="match status" value="1"/>
</dbReference>
<dbReference type="Pfam" id="PF22776">
    <property type="entry name" value="K_trans_C"/>
    <property type="match status" value="1"/>
</dbReference>
<proteinExistence type="inferred from homology"/>
<organism>
    <name type="scientific">Yersinia pestis (strain Pestoides F)</name>
    <dbReference type="NCBI Taxonomy" id="386656"/>
    <lineage>
        <taxon>Bacteria</taxon>
        <taxon>Pseudomonadati</taxon>
        <taxon>Pseudomonadota</taxon>
        <taxon>Gammaproteobacteria</taxon>
        <taxon>Enterobacterales</taxon>
        <taxon>Yersiniaceae</taxon>
        <taxon>Yersinia</taxon>
    </lineage>
</organism>
<accession>A4TSH8</accession>
<keyword id="KW-0997">Cell inner membrane</keyword>
<keyword id="KW-1003">Cell membrane</keyword>
<keyword id="KW-0406">Ion transport</keyword>
<keyword id="KW-0472">Membrane</keyword>
<keyword id="KW-0630">Potassium</keyword>
<keyword id="KW-0633">Potassium transport</keyword>
<keyword id="KW-0769">Symport</keyword>
<keyword id="KW-0812">Transmembrane</keyword>
<keyword id="KW-1133">Transmembrane helix</keyword>
<keyword id="KW-0813">Transport</keyword>
<gene>
    <name evidence="1" type="primary">kup</name>
    <name type="ordered locus">YPDSF_3899</name>
</gene>